<evidence type="ECO:0000255" key="1">
    <source>
        <dbReference type="HAMAP-Rule" id="MF_01183"/>
    </source>
</evidence>
<proteinExistence type="inferred from homology"/>
<gene>
    <name evidence="1" type="primary">surA</name>
    <name type="ordered locus">VC_0445</name>
</gene>
<sequence>MKLWKPTLISVLSALTLFNAHAEPKQLDSVAVIVNSGVILQSDVDSALKTIKANAKQNKQPLPQETVLREQVLEKLIIDTLQQQEADRIGVKIDDNRLNEAIKEIAKNNQQTQEQLIASVAQEGLTYPEFREQVRKEMAASDARNALVRRRINILPAEVDTLAELLAQETDATVQYKISHIQLRVDDGQDKSTAETLANKLVNDLRNGADFAQMAYAYSKGPKALQGGDWGWMRKEEMPTIFADQIKMQNKGSIIGPFRSGVGFHILKIDDVKGLETVAVTEVNARHILIKPTIILSDEGAQKQLNEFVQRIKNGEVTFAELAQQYSQDPGSAAQKGELGYQTPDLYVPEFKHQIETLPVGQISEPFKTVHGWHIVEVLDRREVDRTDSALKNKAYRILFNRKFNEEASAWLQELRASAFVEVLKDEKDEQ</sequence>
<protein>
    <recommendedName>
        <fullName evidence="1">Chaperone SurA</fullName>
    </recommendedName>
    <alternativeName>
        <fullName evidence="1">Peptidyl-prolyl cis-trans isomerase SurA</fullName>
        <shortName evidence="1">PPIase SurA</shortName>
        <ecNumber evidence="1">5.2.1.8</ecNumber>
    </alternativeName>
    <alternativeName>
        <fullName evidence="1">Rotamase SurA</fullName>
    </alternativeName>
</protein>
<keyword id="KW-0143">Chaperone</keyword>
<keyword id="KW-0413">Isomerase</keyword>
<keyword id="KW-0574">Periplasm</keyword>
<keyword id="KW-1185">Reference proteome</keyword>
<keyword id="KW-0677">Repeat</keyword>
<keyword id="KW-0697">Rotamase</keyword>
<keyword id="KW-0732">Signal</keyword>
<accession>Q9KUS0</accession>
<organism>
    <name type="scientific">Vibrio cholerae serotype O1 (strain ATCC 39315 / El Tor Inaba N16961)</name>
    <dbReference type="NCBI Taxonomy" id="243277"/>
    <lineage>
        <taxon>Bacteria</taxon>
        <taxon>Pseudomonadati</taxon>
        <taxon>Pseudomonadota</taxon>
        <taxon>Gammaproteobacteria</taxon>
        <taxon>Vibrionales</taxon>
        <taxon>Vibrionaceae</taxon>
        <taxon>Vibrio</taxon>
    </lineage>
</organism>
<comment type="function">
    <text evidence="1">Chaperone involved in the correct folding and assembly of outer membrane proteins. Recognizes specific patterns of aromatic residues and the orientation of their side chains, which are found more frequently in integral outer membrane proteins. May act in both early periplasmic and late outer membrane-associated steps of protein maturation.</text>
</comment>
<comment type="catalytic activity">
    <reaction evidence="1">
        <text>[protein]-peptidylproline (omega=180) = [protein]-peptidylproline (omega=0)</text>
        <dbReference type="Rhea" id="RHEA:16237"/>
        <dbReference type="Rhea" id="RHEA-COMP:10747"/>
        <dbReference type="Rhea" id="RHEA-COMP:10748"/>
        <dbReference type="ChEBI" id="CHEBI:83833"/>
        <dbReference type="ChEBI" id="CHEBI:83834"/>
        <dbReference type="EC" id="5.2.1.8"/>
    </reaction>
</comment>
<comment type="subcellular location">
    <subcellularLocation>
        <location evidence="1">Periplasm</location>
    </subcellularLocation>
    <text evidence="1">Is capable of associating with the outer membrane.</text>
</comment>
<comment type="domain">
    <text evidence="1">The PPIase activity resides only in the second parvulin domain. The N-terminal region and the C-terminal tail are necessary and sufficient for the chaperone activity of SurA. The PPIase activity is dispensable for SurA to function as a chaperone. The N-terminal region and the C-terminal tail are also required for porin recognition.</text>
</comment>
<name>SURA_VIBCH</name>
<reference key="1">
    <citation type="journal article" date="2000" name="Nature">
        <title>DNA sequence of both chromosomes of the cholera pathogen Vibrio cholerae.</title>
        <authorList>
            <person name="Heidelberg J.F."/>
            <person name="Eisen J.A."/>
            <person name="Nelson W.C."/>
            <person name="Clayton R.A."/>
            <person name="Gwinn M.L."/>
            <person name="Dodson R.J."/>
            <person name="Haft D.H."/>
            <person name="Hickey E.K."/>
            <person name="Peterson J.D."/>
            <person name="Umayam L.A."/>
            <person name="Gill S.R."/>
            <person name="Nelson K.E."/>
            <person name="Read T.D."/>
            <person name="Tettelin H."/>
            <person name="Richardson D.L."/>
            <person name="Ermolaeva M.D."/>
            <person name="Vamathevan J.J."/>
            <person name="Bass S."/>
            <person name="Qin H."/>
            <person name="Dragoi I."/>
            <person name="Sellers P."/>
            <person name="McDonald L.A."/>
            <person name="Utterback T.R."/>
            <person name="Fleischmann R.D."/>
            <person name="Nierman W.C."/>
            <person name="White O."/>
            <person name="Salzberg S.L."/>
            <person name="Smith H.O."/>
            <person name="Colwell R.R."/>
            <person name="Mekalanos J.J."/>
            <person name="Venter J.C."/>
            <person name="Fraser C.M."/>
        </authorList>
    </citation>
    <scope>NUCLEOTIDE SEQUENCE [LARGE SCALE GENOMIC DNA]</scope>
    <source>
        <strain>ATCC 39315 / El Tor Inaba N16961</strain>
    </source>
</reference>
<feature type="signal peptide" evidence="1">
    <location>
        <begin position="1"/>
        <end position="22"/>
    </location>
</feature>
<feature type="chain" id="PRO_0000270043" description="Chaperone SurA">
    <location>
        <begin position="23"/>
        <end position="431"/>
    </location>
</feature>
<feature type="domain" description="PpiC 1" evidence="1">
    <location>
        <begin position="173"/>
        <end position="271"/>
    </location>
</feature>
<feature type="domain" description="PpiC 2" evidence="1">
    <location>
        <begin position="280"/>
        <end position="380"/>
    </location>
</feature>
<dbReference type="EC" id="5.2.1.8" evidence="1"/>
<dbReference type="EMBL" id="AE003852">
    <property type="protein sequence ID" value="AAF93618.1"/>
    <property type="molecule type" value="Genomic_DNA"/>
</dbReference>
<dbReference type="PIR" id="D82323">
    <property type="entry name" value="D82323"/>
</dbReference>
<dbReference type="RefSeq" id="NP_230099.1">
    <property type="nucleotide sequence ID" value="NC_002505.1"/>
</dbReference>
<dbReference type="RefSeq" id="WP_000780524.1">
    <property type="nucleotide sequence ID" value="NZ_LT906614.1"/>
</dbReference>
<dbReference type="SMR" id="Q9KUS0"/>
<dbReference type="STRING" id="243277.VC_0445"/>
<dbReference type="DNASU" id="2615777"/>
<dbReference type="EnsemblBacteria" id="AAF93618">
    <property type="protein sequence ID" value="AAF93618"/>
    <property type="gene ID" value="VC_0445"/>
</dbReference>
<dbReference type="KEGG" id="vch:VC_0445"/>
<dbReference type="PATRIC" id="fig|243277.26.peg.419"/>
<dbReference type="eggNOG" id="COG0760">
    <property type="taxonomic scope" value="Bacteria"/>
</dbReference>
<dbReference type="HOGENOM" id="CLU_034646_11_0_6"/>
<dbReference type="Proteomes" id="UP000000584">
    <property type="component" value="Chromosome 1"/>
</dbReference>
<dbReference type="GO" id="GO:0030288">
    <property type="term" value="C:outer membrane-bounded periplasmic space"/>
    <property type="evidence" value="ECO:0000318"/>
    <property type="project" value="GO_Central"/>
</dbReference>
<dbReference type="GO" id="GO:0042277">
    <property type="term" value="F:peptide binding"/>
    <property type="evidence" value="ECO:0007669"/>
    <property type="project" value="InterPro"/>
</dbReference>
<dbReference type="GO" id="GO:0003755">
    <property type="term" value="F:peptidyl-prolyl cis-trans isomerase activity"/>
    <property type="evidence" value="ECO:0000318"/>
    <property type="project" value="GO_Central"/>
</dbReference>
<dbReference type="GO" id="GO:0051082">
    <property type="term" value="F:unfolded protein binding"/>
    <property type="evidence" value="ECO:0000318"/>
    <property type="project" value="GO_Central"/>
</dbReference>
<dbReference type="GO" id="GO:0061077">
    <property type="term" value="P:chaperone-mediated protein folding"/>
    <property type="evidence" value="ECO:0000318"/>
    <property type="project" value="GO_Central"/>
</dbReference>
<dbReference type="GO" id="GO:0043165">
    <property type="term" value="P:Gram-negative-bacterium-type cell outer membrane assembly"/>
    <property type="evidence" value="ECO:0007669"/>
    <property type="project" value="InterPro"/>
</dbReference>
<dbReference type="GO" id="GO:0050821">
    <property type="term" value="P:protein stabilization"/>
    <property type="evidence" value="ECO:0007669"/>
    <property type="project" value="InterPro"/>
</dbReference>
<dbReference type="Gene3D" id="3.10.50.40">
    <property type="match status" value="2"/>
</dbReference>
<dbReference type="Gene3D" id="1.10.4030.10">
    <property type="entry name" value="Porin chaperone SurA, peptide-binding domain"/>
    <property type="match status" value="1"/>
</dbReference>
<dbReference type="HAMAP" id="MF_01183">
    <property type="entry name" value="Chaperone_SurA"/>
    <property type="match status" value="1"/>
</dbReference>
<dbReference type="InterPro" id="IPR050280">
    <property type="entry name" value="OMP_Chaperone_SurA"/>
</dbReference>
<dbReference type="InterPro" id="IPR046357">
    <property type="entry name" value="PPIase_dom_sf"/>
</dbReference>
<dbReference type="InterPro" id="IPR000297">
    <property type="entry name" value="PPIase_PpiC"/>
</dbReference>
<dbReference type="InterPro" id="IPR023034">
    <property type="entry name" value="PPIase_SurA"/>
</dbReference>
<dbReference type="InterPro" id="IPR015391">
    <property type="entry name" value="SurA_N"/>
</dbReference>
<dbReference type="InterPro" id="IPR027304">
    <property type="entry name" value="Trigger_fact/SurA_dom_sf"/>
</dbReference>
<dbReference type="NCBIfam" id="NF008038">
    <property type="entry name" value="PRK10770.1"/>
    <property type="match status" value="1"/>
</dbReference>
<dbReference type="PANTHER" id="PTHR47637">
    <property type="entry name" value="CHAPERONE SURA"/>
    <property type="match status" value="1"/>
</dbReference>
<dbReference type="PANTHER" id="PTHR47637:SF1">
    <property type="entry name" value="CHAPERONE SURA"/>
    <property type="match status" value="1"/>
</dbReference>
<dbReference type="Pfam" id="PF13616">
    <property type="entry name" value="Rotamase_3"/>
    <property type="match status" value="2"/>
</dbReference>
<dbReference type="Pfam" id="PF09312">
    <property type="entry name" value="SurA_N"/>
    <property type="match status" value="1"/>
</dbReference>
<dbReference type="SUPFAM" id="SSF54534">
    <property type="entry name" value="FKBP-like"/>
    <property type="match status" value="2"/>
</dbReference>
<dbReference type="SUPFAM" id="SSF109998">
    <property type="entry name" value="Triger factor/SurA peptide-binding domain-like"/>
    <property type="match status" value="1"/>
</dbReference>
<dbReference type="PROSITE" id="PS50198">
    <property type="entry name" value="PPIC_PPIASE_2"/>
    <property type="match status" value="2"/>
</dbReference>